<organism>
    <name type="scientific">Vibrio cholerae serotype O1 (strain ATCC 39315 / El Tor Inaba N16961)</name>
    <dbReference type="NCBI Taxonomy" id="243277"/>
    <lineage>
        <taxon>Bacteria</taxon>
        <taxon>Pseudomonadati</taxon>
        <taxon>Pseudomonadota</taxon>
        <taxon>Gammaproteobacteria</taxon>
        <taxon>Vibrionales</taxon>
        <taxon>Vibrionaceae</taxon>
        <taxon>Vibrio</taxon>
    </lineage>
</organism>
<dbReference type="EC" id="3.4.21.92" evidence="1"/>
<dbReference type="EMBL" id="AE003852">
    <property type="protein sequence ID" value="AAF95070.1"/>
    <property type="molecule type" value="Genomic_DNA"/>
</dbReference>
<dbReference type="PIR" id="G82139">
    <property type="entry name" value="G82139"/>
</dbReference>
<dbReference type="RefSeq" id="NP_231556.1">
    <property type="nucleotide sequence ID" value="NC_002505.1"/>
</dbReference>
<dbReference type="SMR" id="Q9KQS6"/>
<dbReference type="STRING" id="243277.VC_1922"/>
<dbReference type="MEROPS" id="S14.001"/>
<dbReference type="DNASU" id="2613551"/>
<dbReference type="EnsemblBacteria" id="AAF95070">
    <property type="protein sequence ID" value="AAF95070"/>
    <property type="gene ID" value="VC_1922"/>
</dbReference>
<dbReference type="KEGG" id="vch:VC_1922"/>
<dbReference type="PATRIC" id="fig|243277.26.peg.1839"/>
<dbReference type="eggNOG" id="COG0740">
    <property type="taxonomic scope" value="Bacteria"/>
</dbReference>
<dbReference type="HOGENOM" id="CLU_058707_3_2_6"/>
<dbReference type="Proteomes" id="UP000000584">
    <property type="component" value="Chromosome 1"/>
</dbReference>
<dbReference type="GO" id="GO:0005737">
    <property type="term" value="C:cytoplasm"/>
    <property type="evidence" value="ECO:0007669"/>
    <property type="project" value="UniProtKB-SubCell"/>
</dbReference>
<dbReference type="GO" id="GO:0009368">
    <property type="term" value="C:endopeptidase Clp complex"/>
    <property type="evidence" value="ECO:0000318"/>
    <property type="project" value="GO_Central"/>
</dbReference>
<dbReference type="GO" id="GO:0004176">
    <property type="term" value="F:ATP-dependent peptidase activity"/>
    <property type="evidence" value="ECO:0000318"/>
    <property type="project" value="GO_Central"/>
</dbReference>
<dbReference type="GO" id="GO:0051117">
    <property type="term" value="F:ATPase binding"/>
    <property type="evidence" value="ECO:0000318"/>
    <property type="project" value="GO_Central"/>
</dbReference>
<dbReference type="GO" id="GO:0004252">
    <property type="term" value="F:serine-type endopeptidase activity"/>
    <property type="evidence" value="ECO:0000318"/>
    <property type="project" value="GO_Central"/>
</dbReference>
<dbReference type="GO" id="GO:0006515">
    <property type="term" value="P:protein quality control for misfolded or incompletely synthesized proteins"/>
    <property type="evidence" value="ECO:0000318"/>
    <property type="project" value="GO_Central"/>
</dbReference>
<dbReference type="CDD" id="cd07017">
    <property type="entry name" value="S14_ClpP_2"/>
    <property type="match status" value="1"/>
</dbReference>
<dbReference type="FunFam" id="3.90.226.10:FF:000001">
    <property type="entry name" value="ATP-dependent Clp protease proteolytic subunit"/>
    <property type="match status" value="1"/>
</dbReference>
<dbReference type="Gene3D" id="3.90.226.10">
    <property type="entry name" value="2-enoyl-CoA Hydratase, Chain A, domain 1"/>
    <property type="match status" value="1"/>
</dbReference>
<dbReference type="HAMAP" id="MF_00444">
    <property type="entry name" value="ClpP"/>
    <property type="match status" value="1"/>
</dbReference>
<dbReference type="InterPro" id="IPR001907">
    <property type="entry name" value="ClpP"/>
</dbReference>
<dbReference type="InterPro" id="IPR029045">
    <property type="entry name" value="ClpP/crotonase-like_dom_sf"/>
</dbReference>
<dbReference type="InterPro" id="IPR023562">
    <property type="entry name" value="ClpP/TepA"/>
</dbReference>
<dbReference type="InterPro" id="IPR033135">
    <property type="entry name" value="ClpP_His_AS"/>
</dbReference>
<dbReference type="InterPro" id="IPR018215">
    <property type="entry name" value="ClpP_Ser_AS"/>
</dbReference>
<dbReference type="NCBIfam" id="TIGR00493">
    <property type="entry name" value="clpP"/>
    <property type="match status" value="1"/>
</dbReference>
<dbReference type="NCBIfam" id="NF001368">
    <property type="entry name" value="PRK00277.1"/>
    <property type="match status" value="1"/>
</dbReference>
<dbReference type="NCBIfam" id="NF009205">
    <property type="entry name" value="PRK12553.1"/>
    <property type="match status" value="1"/>
</dbReference>
<dbReference type="PANTHER" id="PTHR10381">
    <property type="entry name" value="ATP-DEPENDENT CLP PROTEASE PROTEOLYTIC SUBUNIT"/>
    <property type="match status" value="1"/>
</dbReference>
<dbReference type="PANTHER" id="PTHR10381:SF70">
    <property type="entry name" value="ATP-DEPENDENT CLP PROTEASE PROTEOLYTIC SUBUNIT"/>
    <property type="match status" value="1"/>
</dbReference>
<dbReference type="Pfam" id="PF00574">
    <property type="entry name" value="CLP_protease"/>
    <property type="match status" value="1"/>
</dbReference>
<dbReference type="PRINTS" id="PR00127">
    <property type="entry name" value="CLPPROTEASEP"/>
</dbReference>
<dbReference type="SUPFAM" id="SSF52096">
    <property type="entry name" value="ClpP/crotonase"/>
    <property type="match status" value="1"/>
</dbReference>
<dbReference type="PROSITE" id="PS00382">
    <property type="entry name" value="CLP_PROTEASE_HIS"/>
    <property type="match status" value="1"/>
</dbReference>
<dbReference type="PROSITE" id="PS00381">
    <property type="entry name" value="CLP_PROTEASE_SER"/>
    <property type="match status" value="1"/>
</dbReference>
<accession>Q9KQS6</accession>
<evidence type="ECO:0000255" key="1">
    <source>
        <dbReference type="HAMAP-Rule" id="MF_00444"/>
    </source>
</evidence>
<gene>
    <name evidence="1" type="primary">clpP</name>
    <name type="ordered locus">VC_1922</name>
</gene>
<name>CLPP_VIBCH</name>
<comment type="function">
    <text evidence="1">Cleaves peptides in various proteins in a process that requires ATP hydrolysis. Has a chymotrypsin-like activity. Plays a major role in the degradation of misfolded proteins.</text>
</comment>
<comment type="catalytic activity">
    <reaction evidence="1">
        <text>Hydrolysis of proteins to small peptides in the presence of ATP and magnesium. alpha-casein is the usual test substrate. In the absence of ATP, only oligopeptides shorter than five residues are hydrolyzed (such as succinyl-Leu-Tyr-|-NHMec, and Leu-Tyr-Leu-|-Tyr-Trp, in which cleavage of the -Tyr-|-Leu- and -Tyr-|-Trp bonds also occurs).</text>
        <dbReference type="EC" id="3.4.21.92"/>
    </reaction>
</comment>
<comment type="subunit">
    <text evidence="1">Fourteen ClpP subunits assemble into 2 heptameric rings which stack back to back to give a disk-like structure with a central cavity, resembling the structure of eukaryotic proteasomes.</text>
</comment>
<comment type="subcellular location">
    <subcellularLocation>
        <location evidence="1">Cytoplasm</location>
    </subcellularLocation>
</comment>
<comment type="similarity">
    <text evidence="1">Belongs to the peptidase S14 family.</text>
</comment>
<sequence>MSPIFDALVPMVVEQTSRGERSYDIYSRLLKERVIFLTGQVEDHMANLVVAQLLFLESENPDKDIFLYINSPGGSVTAGMSIYDTMQFIKPNVSTVCMGQACSMGAFLLAGGAPGKRYVLPNSRVMIHQPLGGFQGQASDIQIHAQEILTIKNKLNRLLAEHTGQPIEVIERDTDRDNFMSADQAVEYGLVDAVLKHRGE</sequence>
<proteinExistence type="inferred from homology"/>
<keyword id="KW-0963">Cytoplasm</keyword>
<keyword id="KW-0378">Hydrolase</keyword>
<keyword id="KW-0645">Protease</keyword>
<keyword id="KW-1185">Reference proteome</keyword>
<keyword id="KW-0720">Serine protease</keyword>
<reference key="1">
    <citation type="journal article" date="2000" name="Nature">
        <title>DNA sequence of both chromosomes of the cholera pathogen Vibrio cholerae.</title>
        <authorList>
            <person name="Heidelberg J.F."/>
            <person name="Eisen J.A."/>
            <person name="Nelson W.C."/>
            <person name="Clayton R.A."/>
            <person name="Gwinn M.L."/>
            <person name="Dodson R.J."/>
            <person name="Haft D.H."/>
            <person name="Hickey E.K."/>
            <person name="Peterson J.D."/>
            <person name="Umayam L.A."/>
            <person name="Gill S.R."/>
            <person name="Nelson K.E."/>
            <person name="Read T.D."/>
            <person name="Tettelin H."/>
            <person name="Richardson D.L."/>
            <person name="Ermolaeva M.D."/>
            <person name="Vamathevan J.J."/>
            <person name="Bass S."/>
            <person name="Qin H."/>
            <person name="Dragoi I."/>
            <person name="Sellers P."/>
            <person name="McDonald L.A."/>
            <person name="Utterback T.R."/>
            <person name="Fleischmann R.D."/>
            <person name="Nierman W.C."/>
            <person name="White O."/>
            <person name="Salzberg S.L."/>
            <person name="Smith H.O."/>
            <person name="Colwell R.R."/>
            <person name="Mekalanos J.J."/>
            <person name="Venter J.C."/>
            <person name="Fraser C.M."/>
        </authorList>
    </citation>
    <scope>NUCLEOTIDE SEQUENCE [LARGE SCALE GENOMIC DNA]</scope>
    <source>
        <strain>ATCC 39315 / El Tor Inaba N16961</strain>
    </source>
</reference>
<feature type="chain" id="PRO_0000179710" description="ATP-dependent Clp protease proteolytic subunit">
    <location>
        <begin position="1"/>
        <end position="200"/>
    </location>
</feature>
<feature type="active site" description="Nucleophile" evidence="1">
    <location>
        <position position="103"/>
    </location>
</feature>
<feature type="active site" evidence="1">
    <location>
        <position position="128"/>
    </location>
</feature>
<protein>
    <recommendedName>
        <fullName evidence="1">ATP-dependent Clp protease proteolytic subunit</fullName>
        <ecNumber evidence="1">3.4.21.92</ecNumber>
    </recommendedName>
    <alternativeName>
        <fullName evidence="1">Endopeptidase Clp</fullName>
    </alternativeName>
</protein>